<comment type="function">
    <text evidence="4 5 6 7">Core component of the smc-5/smc-6 complex (PubMed:20661436). Involved in DNA double-strand break repair by promoting sister-chromatid homologous recombination during meiosis (PubMed:20661436, PubMed:24939994, PubMed:27010650). Also plays a role in the DNA damage repair of ultraviolet (UV) radiation-induced DNA lesions (PubMed:24424777). Promotes efficient DNA replication (PubMed:24424777).</text>
</comment>
<comment type="subunit">
    <text evidence="4">Interacts with smc-5.</text>
</comment>
<comment type="subcellular location">
    <subcellularLocation>
        <location evidence="4">Nucleus</location>
    </subcellularLocation>
    <subcellularLocation>
        <location evidence="4">Chromosome</location>
    </subcellularLocation>
    <text evidence="4">Nucleoplasmic in the distal gonad arm and localizes on chromosomes during pachytene, diplotene and diakinesis in oocytes.</text>
</comment>
<comment type="tissue specificity">
    <text evidence="4">Expressed in the germline (at protein level).</text>
</comment>
<comment type="developmental stage">
    <text evidence="5">Expressed in the primordial germ cells Z2 and Z3 in embryos and in proliferating germ cells in L2/L3 stage larvae (at protein level).</text>
</comment>
<comment type="domain">
    <text evidence="8">The flexible hinge domain, which separates the large intramolecular coiled coil regions, allows the heterotypic interaction with the corresponding domain of smc-5, forming a V-shaped heterodimer.</text>
</comment>
<comment type="disruption phenotype">
    <text evidence="4 5 6 7">Reduced fecundity and transgenerational sterility (PubMed:20661436). Increased germ cell apoptosis and hypersensitivity to ultraviolet and ionizing radiation and hydroxyurea-induced replication stress (PubMed:20661436, PubMed:24424777). Increased rad-51 foci in the mitotic and meiotic germline on autosomes, but not on X chromosomes (PubMed:20661436, PubMed:24424777, PubMed:24939994, PubMed:27010650). Chromosome fragmentation defects and unresolved diakinesis chromosomes in meiotic oocytes (PubMed:20661436, PubMed:27010650). Impaired DNA replication in germ cells (PubMed:24424777). Accumulation of brd-1 on chromosomes in mitotic germ cells (PubMed:24424777). In a him-3 mutant background, increased rad-51 foci and chromosome fragmentation (PubMed:20661436). RNAi-mediated knockdown of syp-2 leads to an increase of chromosome fragmentation (PubMed:20661436). In a him-6 mutant background, leads to synergistic lethality (PubMed:27010650). In a fem-3 or him-8 mutant background, RNAi-mediated knockdown leads to increased fragmentation of autosomes and asynapsed X chromosomes but not of X chromosomes in males (PubMed:24939994).</text>
</comment>
<comment type="similarity">
    <text evidence="8">Belongs to the SMC family. SMC6 subfamily.</text>
</comment>
<name>SMC6_CAEEL</name>
<gene>
    <name evidence="10" type="primary">smc-6</name>
    <name evidence="10" type="ORF">F54D5.14</name>
</gene>
<protein>
    <recommendedName>
        <fullName evidence="8">Structural maintenance of chromosomes protein 6 homolog smc-6</fullName>
    </recommendedName>
</protein>
<evidence type="ECO:0000255" key="1"/>
<evidence type="ECO:0000255" key="2">
    <source>
        <dbReference type="PROSITE-ProRule" id="PRU00499"/>
    </source>
</evidence>
<evidence type="ECO:0000256" key="3">
    <source>
        <dbReference type="SAM" id="MobiDB-lite"/>
    </source>
</evidence>
<evidence type="ECO:0000269" key="4">
    <source>
    </source>
</evidence>
<evidence type="ECO:0000269" key="5">
    <source>
    </source>
</evidence>
<evidence type="ECO:0000269" key="6">
    <source>
    </source>
</evidence>
<evidence type="ECO:0000269" key="7">
    <source>
    </source>
</evidence>
<evidence type="ECO:0000305" key="8"/>
<evidence type="ECO:0000312" key="9">
    <source>
        <dbReference type="Proteomes" id="UP000001940"/>
    </source>
</evidence>
<evidence type="ECO:0000312" key="10">
    <source>
        <dbReference type="WormBase" id="F54D5.14"/>
    </source>
</evidence>
<accession>G5EG17</accession>
<sequence length="1149" mass="131796">MGKRDIPSPNENIAPRTIGMRDVDLTAAPAKKAKLDTGERIAVSGRVASVKLTNFMCHANLQIDFKTAQNNCFYIGGPNGSGKSALFAAINLGLGGRGSDNDRGNTVKSYIKDGTTQSKITITLTNAGLNAHPDFDDLISIERTINQASSTYIMKSVKVTSSDNHVERIVSRKKADVDRIVSRFSIHLSNPAFWMSQDRSRSFLANFKPANVYKLYLESTNLENIRLSYIRFADALDECFALIQLKAGEILNEQKKLKRMQEQRDLQAKLDQDRALVASFCWKLLFCKVRDYNDQIELTLKKQEAQKTLQDETKKEYAKNRAARTEVEKKIQEFRDEVEVQDAEIAEAREDLDAKKRKVLEFEEKIRECEQSIRKKTSEKKYMERTIVNAKNEVRILLEKQGNQDLTKRLTKVENDYKDISQQRENMELGGESAKLREKLDTVITDYKRKEEEKYTIQRDINQLRRKIEQDMETMRRSRATKKDAINKFGSHMAEILMEINRSKSRFQTVPKGPLGKYITLIDPKWAFTVEECIGNLANNFLCSSHLDAEILRNIFQSLRIPAQDRPTIIVAKCNGRAYTNLHEPSSDFKSIYRVLKFSDPDVHNVIIDKSNCEQFILIEDKTEAMELMGSNYPPQNAVKAYTLDGSQAYANGPNSQYRFYSGRGGHARGTFGNDQGDVDEGALARLIEDTKSEAMRLETQDLRKQDHELKVIYNERDQTKAAIDEFDRKLSNLRSQELQKERQAKDLRAELAQTANEDQVENLNESIEEMQKKIPLIEDEVKDILKNVADITADMAPVIQERKEAEHTLAEIQKETRDFASKSQKLQNELSKYDDAGEILKIRLDKVKADEGVFFHTEAKLKSERDDAMEMVENDKKNHPMPPGETDPPDLSSFPSTTEAQRKIEEMQKAVDRATVGCDTTITLECVKDFKDKLKRLKYLCRMIEDVLIELKNLHAARVKAYPSLKKFTELKVCNKFQELLAVRGHFIGGLEFDHEKETLNVNVQSSKEKDAMAGRRPEVLEVEEVDEHSYDDDSDDSTGPRRKKSKKSGQKKKRVRDLKGLSGGERSFVTAALVMSLWEVMEQPFRMMDEFDVFMDMMNRKLVMDLLVELATKKFPHNQFIFFTPQGIKELNMVDGLQVFEMNRVRD</sequence>
<organism evidence="9">
    <name type="scientific">Caenorhabditis elegans</name>
    <dbReference type="NCBI Taxonomy" id="6239"/>
    <lineage>
        <taxon>Eukaryota</taxon>
        <taxon>Metazoa</taxon>
        <taxon>Ecdysozoa</taxon>
        <taxon>Nematoda</taxon>
        <taxon>Chromadorea</taxon>
        <taxon>Rhabditida</taxon>
        <taxon>Rhabditina</taxon>
        <taxon>Rhabditomorpha</taxon>
        <taxon>Rhabditoidea</taxon>
        <taxon>Rhabditidae</taxon>
        <taxon>Peloderinae</taxon>
        <taxon>Caenorhabditis</taxon>
    </lineage>
</organism>
<feature type="chain" id="PRO_0000439583" description="Structural maintenance of chromosomes protein 6 homolog smc-6">
    <location>
        <begin position="1"/>
        <end position="1149"/>
    </location>
</feature>
<feature type="region of interest" description="Flexible hinge" evidence="8">
    <location>
        <begin position="461"/>
        <end position="687"/>
    </location>
</feature>
<feature type="region of interest" description="Disordered" evidence="3">
    <location>
        <begin position="875"/>
        <end position="900"/>
    </location>
</feature>
<feature type="region of interest" description="Disordered" evidence="3">
    <location>
        <begin position="1026"/>
        <end position="1060"/>
    </location>
</feature>
<feature type="coiled-coil region" evidence="1">
    <location>
        <begin position="309"/>
        <end position="460"/>
    </location>
</feature>
<feature type="coiled-coil region" evidence="1">
    <location>
        <begin position="714"/>
        <end position="920"/>
    </location>
</feature>
<feature type="compositionally biased region" description="Acidic residues" evidence="3">
    <location>
        <begin position="1026"/>
        <end position="1038"/>
    </location>
</feature>
<feature type="compositionally biased region" description="Basic residues" evidence="3">
    <location>
        <begin position="1042"/>
        <end position="1058"/>
    </location>
</feature>
<feature type="binding site" evidence="2">
    <location>
        <begin position="77"/>
        <end position="84"/>
    </location>
    <ligand>
        <name>ATP</name>
        <dbReference type="ChEBI" id="CHEBI:30616"/>
    </ligand>
</feature>
<reference evidence="9" key="1">
    <citation type="journal article" date="1998" name="Science">
        <title>Genome sequence of the nematode C. elegans: a platform for investigating biology.</title>
        <authorList>
            <consortium name="The C. elegans sequencing consortium"/>
        </authorList>
    </citation>
    <scope>NUCLEOTIDE SEQUENCE [LARGE SCALE GENOMIC DNA]</scope>
    <source>
        <strain evidence="9">Bristol N2</strain>
    </source>
</reference>
<reference evidence="8" key="2">
    <citation type="journal article" date="2010" name="PLoS Genet.">
        <title>Structural maintenance of chromosomes (SMC) proteins promote homolog-independent recombination repair in meiosis crucial for germ cell genomic stability.</title>
        <authorList>
            <person name="Bickel J.S."/>
            <person name="Chen L."/>
            <person name="Hayward J."/>
            <person name="Yeap S.L."/>
            <person name="Alkers A.E."/>
            <person name="Chan R.C."/>
        </authorList>
    </citation>
    <scope>FUNCTION</scope>
    <scope>INTERACTION WITH SMC-5</scope>
    <scope>SUBCELLULAR LOCATION</scope>
    <scope>TISSUE SPECIFICITY</scope>
    <scope>DISRUPTION PHENOTYPE</scope>
</reference>
<reference evidence="8" key="3">
    <citation type="journal article" date="2014" name="Genetics">
        <title>Loss of Caenorhabditis elegans BRCA1 promotes genome stability during replication in smc-5 mutants.</title>
        <authorList>
            <person name="Wolters S."/>
            <person name="Ermolaeva M.A."/>
            <person name="Bickel J.S."/>
            <person name="Fingerhut J.M."/>
            <person name="Khanikar J."/>
            <person name="Chan R.C."/>
            <person name="Schumacher B."/>
        </authorList>
    </citation>
    <scope>FUNCTION</scope>
    <scope>DEVELOPMENTAL STAGE</scope>
    <scope>DISRUPTION PHENOTYPE</scope>
</reference>
<reference evidence="8" key="4">
    <citation type="journal article" date="2014" name="Genetics">
        <title>Pseudosynapsis and decreased stringency of meiotic repair pathway choice on the hemizygous sex chromosome of Caenorhabditis elegans males.</title>
        <authorList>
            <person name="Checchi P.M."/>
            <person name="Lawrence K.S."/>
            <person name="Van M.V."/>
            <person name="Larson B.J."/>
            <person name="Engebrecht J."/>
        </authorList>
    </citation>
    <scope>FUNCTION</scope>
    <scope>DISRUPTION PHENOTYPE</scope>
</reference>
<reference evidence="8" key="5">
    <citation type="journal article" date="2016" name="PLoS Genet.">
        <title>The SMC-5/6 complex and the HIM-6 (BLM) helicase synergistically promote meiotic recombination intermediate processing and chromosome maturation during Caenorhabditis elegans meiosis.</title>
        <authorList>
            <person name="Hong Y."/>
            <person name="Sonneville R."/>
            <person name="Agostinho A."/>
            <person name="Meier B."/>
            <person name="Wang B."/>
            <person name="Blow J.J."/>
            <person name="Gartner A."/>
        </authorList>
    </citation>
    <scope>FUNCTION</scope>
    <scope>DISRUPTION PHENOTYPE</scope>
</reference>
<proteinExistence type="evidence at protein level"/>
<keyword id="KW-0067">ATP-binding</keyword>
<keyword id="KW-0158">Chromosome</keyword>
<keyword id="KW-0175">Coiled coil</keyword>
<keyword id="KW-0227">DNA damage</keyword>
<keyword id="KW-0233">DNA recombination</keyword>
<keyword id="KW-0234">DNA repair</keyword>
<keyword id="KW-0235">DNA replication</keyword>
<keyword id="KW-0469">Meiosis</keyword>
<keyword id="KW-0547">Nucleotide-binding</keyword>
<keyword id="KW-0539">Nucleus</keyword>
<keyword id="KW-1185">Reference proteome</keyword>
<dbReference type="EMBL" id="BX284602">
    <property type="protein sequence ID" value="CAA91339.2"/>
    <property type="molecule type" value="Genomic_DNA"/>
</dbReference>
<dbReference type="RefSeq" id="NP_496476.2">
    <property type="nucleotide sequence ID" value="NM_064075.9"/>
</dbReference>
<dbReference type="SMR" id="G5EG17"/>
<dbReference type="FunCoup" id="G5EG17">
    <property type="interactions" value="3012"/>
</dbReference>
<dbReference type="STRING" id="6239.F54D5.14.1"/>
<dbReference type="PaxDb" id="6239-F54D5.14"/>
<dbReference type="PeptideAtlas" id="G5EG17"/>
<dbReference type="EnsemblMetazoa" id="F54D5.14.1">
    <property type="protein sequence ID" value="F54D5.14.1"/>
    <property type="gene ID" value="WBGene00010056"/>
</dbReference>
<dbReference type="GeneID" id="174776"/>
<dbReference type="KEGG" id="cel:CELE_F54D5.14"/>
<dbReference type="AGR" id="WB:WBGene00010056"/>
<dbReference type="CTD" id="174776"/>
<dbReference type="WormBase" id="F54D5.14">
    <property type="protein sequence ID" value="CE46466"/>
    <property type="gene ID" value="WBGene00010056"/>
    <property type="gene designation" value="smc-6"/>
</dbReference>
<dbReference type="eggNOG" id="KOG0250">
    <property type="taxonomic scope" value="Eukaryota"/>
</dbReference>
<dbReference type="GeneTree" id="ENSGT00550000074816"/>
<dbReference type="HOGENOM" id="CLU_009063_0_0_1"/>
<dbReference type="InParanoid" id="G5EG17"/>
<dbReference type="OMA" id="MCHDHFY"/>
<dbReference type="OrthoDB" id="10072614at2759"/>
<dbReference type="PhylomeDB" id="G5EG17"/>
<dbReference type="Reactome" id="R-CEL-3108214">
    <property type="pathway name" value="SUMOylation of DNA damage response and repair proteins"/>
</dbReference>
<dbReference type="PRO" id="PR:G5EG17"/>
<dbReference type="Proteomes" id="UP000001940">
    <property type="component" value="Chromosome II"/>
</dbReference>
<dbReference type="Bgee" id="WBGene00010056">
    <property type="expression patterns" value="Expressed in adult organism and 4 other cell types or tissues"/>
</dbReference>
<dbReference type="GO" id="GO:0000794">
    <property type="term" value="C:condensed nuclear chromosome"/>
    <property type="evidence" value="ECO:0000314"/>
    <property type="project" value="WormBase"/>
</dbReference>
<dbReference type="GO" id="GO:0005654">
    <property type="term" value="C:nucleoplasm"/>
    <property type="evidence" value="ECO:0000314"/>
    <property type="project" value="WormBase"/>
</dbReference>
<dbReference type="GO" id="GO:0005634">
    <property type="term" value="C:nucleus"/>
    <property type="evidence" value="ECO:0000318"/>
    <property type="project" value="GO_Central"/>
</dbReference>
<dbReference type="GO" id="GO:0035861">
    <property type="term" value="C:site of double-strand break"/>
    <property type="evidence" value="ECO:0000318"/>
    <property type="project" value="GO_Central"/>
</dbReference>
<dbReference type="GO" id="GO:0030915">
    <property type="term" value="C:Smc5-Smc6 complex"/>
    <property type="evidence" value="ECO:0000318"/>
    <property type="project" value="GO_Central"/>
</dbReference>
<dbReference type="GO" id="GO:0005524">
    <property type="term" value="F:ATP binding"/>
    <property type="evidence" value="ECO:0007669"/>
    <property type="project" value="UniProtKB-KW"/>
</dbReference>
<dbReference type="GO" id="GO:0003684">
    <property type="term" value="F:damaged DNA binding"/>
    <property type="evidence" value="ECO:0000318"/>
    <property type="project" value="GO_Central"/>
</dbReference>
<dbReference type="GO" id="GO:0003697">
    <property type="term" value="F:single-stranded DNA binding"/>
    <property type="evidence" value="ECO:0000318"/>
    <property type="project" value="GO_Central"/>
</dbReference>
<dbReference type="GO" id="GO:0051276">
    <property type="term" value="P:chromosome organization"/>
    <property type="evidence" value="ECO:0007669"/>
    <property type="project" value="InterPro"/>
</dbReference>
<dbReference type="GO" id="GO:0006260">
    <property type="term" value="P:DNA replication"/>
    <property type="evidence" value="ECO:0007669"/>
    <property type="project" value="UniProtKB-KW"/>
</dbReference>
<dbReference type="GO" id="GO:0000724">
    <property type="term" value="P:double-strand break repair via homologous recombination"/>
    <property type="evidence" value="ECO:0000318"/>
    <property type="project" value="GO_Central"/>
</dbReference>
<dbReference type="GO" id="GO:0051321">
    <property type="term" value="P:meiotic cell cycle"/>
    <property type="evidence" value="ECO:0007669"/>
    <property type="project" value="UniProtKB-KW"/>
</dbReference>
<dbReference type="Gene3D" id="3.40.50.300">
    <property type="entry name" value="P-loop containing nucleotide triphosphate hydrolases"/>
    <property type="match status" value="2"/>
</dbReference>
<dbReference type="InterPro" id="IPR027417">
    <property type="entry name" value="P-loop_NTPase"/>
</dbReference>
<dbReference type="InterPro" id="IPR003395">
    <property type="entry name" value="RecF/RecN/SMC_N"/>
</dbReference>
<dbReference type="InterPro" id="IPR036277">
    <property type="entry name" value="SMC_hinge_sf"/>
</dbReference>
<dbReference type="PANTHER" id="PTHR19306">
    <property type="entry name" value="STRUCTURAL MAINTENANCE OF CHROMOSOMES 5,6 SMC5, SMC6"/>
    <property type="match status" value="1"/>
</dbReference>
<dbReference type="PANTHER" id="PTHR19306:SF6">
    <property type="entry name" value="STRUCTURAL MAINTENANCE OF CHROMOSOMES PROTEIN 6"/>
    <property type="match status" value="1"/>
</dbReference>
<dbReference type="Pfam" id="PF02463">
    <property type="entry name" value="SMC_N"/>
    <property type="match status" value="1"/>
</dbReference>
<dbReference type="SUPFAM" id="SSF52540">
    <property type="entry name" value="P-loop containing nucleoside triphosphate hydrolases"/>
    <property type="match status" value="1"/>
</dbReference>
<dbReference type="SUPFAM" id="SSF75553">
    <property type="entry name" value="Smc hinge domain"/>
    <property type="match status" value="1"/>
</dbReference>